<proteinExistence type="inferred from homology"/>
<sequence length="238" mass="26339">MSSIALGVNIDHIATLRNARNVDYPCIIEVANIAVNNGADFITVHLREDRRHIMDDDVFRLKSSLKVPLNLEIAATDEMLSIAIEVKPKCVCLVPEKRQELTTEGGLDVGSIFSYLVSFIEKLHSYDIDVTLFIEPDISQIDLAKKLHANNVELHTGKYCNNATQNELSKIIKAAEHCHHQNITCHAGHGLNYQSAATIAKVPYISALNIGHFLICEAVLHGIGKSIYKMKQVIASTD</sequence>
<dbReference type="EC" id="2.6.99.2" evidence="1"/>
<dbReference type="EMBL" id="CP000107">
    <property type="protein sequence ID" value="AAZ68320.1"/>
    <property type="molecule type" value="Genomic_DNA"/>
</dbReference>
<dbReference type="RefSeq" id="WP_011304398.1">
    <property type="nucleotide sequence ID" value="NC_007354.1"/>
</dbReference>
<dbReference type="SMR" id="Q3YSI5"/>
<dbReference type="FunCoup" id="Q3YSI5">
    <property type="interactions" value="179"/>
</dbReference>
<dbReference type="STRING" id="269484.Ecaj_0273"/>
<dbReference type="KEGG" id="ecn:Ecaj_0273"/>
<dbReference type="eggNOG" id="COG0854">
    <property type="taxonomic scope" value="Bacteria"/>
</dbReference>
<dbReference type="HOGENOM" id="CLU_074563_0_0_5"/>
<dbReference type="InParanoid" id="Q3YSI5"/>
<dbReference type="UniPathway" id="UPA00244">
    <property type="reaction ID" value="UER00313"/>
</dbReference>
<dbReference type="Proteomes" id="UP000000435">
    <property type="component" value="Chromosome"/>
</dbReference>
<dbReference type="GO" id="GO:0005829">
    <property type="term" value="C:cytosol"/>
    <property type="evidence" value="ECO:0007669"/>
    <property type="project" value="TreeGrafter"/>
</dbReference>
<dbReference type="GO" id="GO:0033856">
    <property type="term" value="F:pyridoxine 5'-phosphate synthase activity"/>
    <property type="evidence" value="ECO:0007669"/>
    <property type="project" value="UniProtKB-EC"/>
</dbReference>
<dbReference type="GO" id="GO:0008615">
    <property type="term" value="P:pyridoxine biosynthetic process"/>
    <property type="evidence" value="ECO:0007669"/>
    <property type="project" value="UniProtKB-UniRule"/>
</dbReference>
<dbReference type="CDD" id="cd00003">
    <property type="entry name" value="PNPsynthase"/>
    <property type="match status" value="1"/>
</dbReference>
<dbReference type="Gene3D" id="3.20.20.70">
    <property type="entry name" value="Aldolase class I"/>
    <property type="match status" value="1"/>
</dbReference>
<dbReference type="HAMAP" id="MF_00279">
    <property type="entry name" value="PdxJ"/>
    <property type="match status" value="1"/>
</dbReference>
<dbReference type="InterPro" id="IPR013785">
    <property type="entry name" value="Aldolase_TIM"/>
</dbReference>
<dbReference type="InterPro" id="IPR004569">
    <property type="entry name" value="PyrdxlP_synth_PdxJ"/>
</dbReference>
<dbReference type="InterPro" id="IPR036130">
    <property type="entry name" value="Pyridoxine-5'_phos_synth"/>
</dbReference>
<dbReference type="NCBIfam" id="TIGR00559">
    <property type="entry name" value="pdxJ"/>
    <property type="match status" value="1"/>
</dbReference>
<dbReference type="NCBIfam" id="NF003625">
    <property type="entry name" value="PRK05265.1-3"/>
    <property type="match status" value="1"/>
</dbReference>
<dbReference type="NCBIfam" id="NF003627">
    <property type="entry name" value="PRK05265.1-5"/>
    <property type="match status" value="1"/>
</dbReference>
<dbReference type="PANTHER" id="PTHR30456">
    <property type="entry name" value="PYRIDOXINE 5'-PHOSPHATE SYNTHASE"/>
    <property type="match status" value="1"/>
</dbReference>
<dbReference type="PANTHER" id="PTHR30456:SF0">
    <property type="entry name" value="PYRIDOXINE 5'-PHOSPHATE SYNTHASE"/>
    <property type="match status" value="1"/>
</dbReference>
<dbReference type="Pfam" id="PF03740">
    <property type="entry name" value="PdxJ"/>
    <property type="match status" value="1"/>
</dbReference>
<dbReference type="SUPFAM" id="SSF63892">
    <property type="entry name" value="Pyridoxine 5'-phosphate synthase"/>
    <property type="match status" value="1"/>
</dbReference>
<evidence type="ECO:0000255" key="1">
    <source>
        <dbReference type="HAMAP-Rule" id="MF_00279"/>
    </source>
</evidence>
<protein>
    <recommendedName>
        <fullName evidence="1">Pyridoxine 5'-phosphate synthase</fullName>
        <shortName evidence="1">PNP synthase</shortName>
        <ecNumber evidence="1">2.6.99.2</ecNumber>
    </recommendedName>
</protein>
<organism>
    <name type="scientific">Ehrlichia canis (strain Jake)</name>
    <dbReference type="NCBI Taxonomy" id="269484"/>
    <lineage>
        <taxon>Bacteria</taxon>
        <taxon>Pseudomonadati</taxon>
        <taxon>Pseudomonadota</taxon>
        <taxon>Alphaproteobacteria</taxon>
        <taxon>Rickettsiales</taxon>
        <taxon>Anaplasmataceae</taxon>
        <taxon>Ehrlichia</taxon>
    </lineage>
</organism>
<name>PDXJ_EHRCJ</name>
<comment type="function">
    <text evidence="1">Catalyzes the complicated ring closure reaction between the two acyclic compounds 1-deoxy-D-xylulose-5-phosphate (DXP) and 3-amino-2-oxopropyl phosphate (1-amino-acetone-3-phosphate or AAP) to form pyridoxine 5'-phosphate (PNP) and inorganic phosphate.</text>
</comment>
<comment type="catalytic activity">
    <reaction evidence="1">
        <text>3-amino-2-oxopropyl phosphate + 1-deoxy-D-xylulose 5-phosphate = pyridoxine 5'-phosphate + phosphate + 2 H2O + H(+)</text>
        <dbReference type="Rhea" id="RHEA:15265"/>
        <dbReference type="ChEBI" id="CHEBI:15377"/>
        <dbReference type="ChEBI" id="CHEBI:15378"/>
        <dbReference type="ChEBI" id="CHEBI:43474"/>
        <dbReference type="ChEBI" id="CHEBI:57279"/>
        <dbReference type="ChEBI" id="CHEBI:57792"/>
        <dbReference type="ChEBI" id="CHEBI:58589"/>
        <dbReference type="EC" id="2.6.99.2"/>
    </reaction>
</comment>
<comment type="pathway">
    <text evidence="1">Cofactor biosynthesis; pyridoxine 5'-phosphate biosynthesis; pyridoxine 5'-phosphate from D-erythrose 4-phosphate: step 5/5.</text>
</comment>
<comment type="subunit">
    <text evidence="1">Homooctamer; tetramer of dimers.</text>
</comment>
<comment type="subcellular location">
    <subcellularLocation>
        <location evidence="1">Cytoplasm</location>
    </subcellularLocation>
</comment>
<comment type="similarity">
    <text evidence="1">Belongs to the PNP synthase family.</text>
</comment>
<gene>
    <name evidence="1" type="primary">pdxJ</name>
    <name type="ordered locus">Ecaj_0273</name>
</gene>
<keyword id="KW-0963">Cytoplasm</keyword>
<keyword id="KW-0664">Pyridoxine biosynthesis</keyword>
<keyword id="KW-0808">Transferase</keyword>
<feature type="chain" id="PRO_0000231804" description="Pyridoxine 5'-phosphate synthase">
    <location>
        <begin position="1"/>
        <end position="238"/>
    </location>
</feature>
<feature type="active site" description="Proton acceptor" evidence="1">
    <location>
        <position position="45"/>
    </location>
</feature>
<feature type="active site" description="Proton acceptor" evidence="1">
    <location>
        <position position="72"/>
    </location>
</feature>
<feature type="active site" description="Proton donor" evidence="1">
    <location>
        <position position="189"/>
    </location>
</feature>
<feature type="binding site" evidence="1">
    <location>
        <position position="9"/>
    </location>
    <ligand>
        <name>3-amino-2-oxopropyl phosphate</name>
        <dbReference type="ChEBI" id="CHEBI:57279"/>
    </ligand>
</feature>
<feature type="binding site" evidence="1">
    <location>
        <begin position="11"/>
        <end position="12"/>
    </location>
    <ligand>
        <name>1-deoxy-D-xylulose 5-phosphate</name>
        <dbReference type="ChEBI" id="CHEBI:57792"/>
    </ligand>
</feature>
<feature type="binding site" evidence="1">
    <location>
        <position position="20"/>
    </location>
    <ligand>
        <name>3-amino-2-oxopropyl phosphate</name>
        <dbReference type="ChEBI" id="CHEBI:57279"/>
    </ligand>
</feature>
<feature type="binding site" evidence="1">
    <location>
        <position position="47"/>
    </location>
    <ligand>
        <name>1-deoxy-D-xylulose 5-phosphate</name>
        <dbReference type="ChEBI" id="CHEBI:57792"/>
    </ligand>
</feature>
<feature type="binding site" evidence="1">
    <location>
        <position position="52"/>
    </location>
    <ligand>
        <name>1-deoxy-D-xylulose 5-phosphate</name>
        <dbReference type="ChEBI" id="CHEBI:57792"/>
    </ligand>
</feature>
<feature type="binding site" evidence="1">
    <location>
        <position position="102"/>
    </location>
    <ligand>
        <name>1-deoxy-D-xylulose 5-phosphate</name>
        <dbReference type="ChEBI" id="CHEBI:57792"/>
    </ligand>
</feature>
<feature type="binding site" evidence="1">
    <location>
        <position position="190"/>
    </location>
    <ligand>
        <name>3-amino-2-oxopropyl phosphate</name>
        <dbReference type="ChEBI" id="CHEBI:57279"/>
    </ligand>
</feature>
<feature type="binding site" evidence="1">
    <location>
        <begin position="211"/>
        <end position="212"/>
    </location>
    <ligand>
        <name>3-amino-2-oxopropyl phosphate</name>
        <dbReference type="ChEBI" id="CHEBI:57279"/>
    </ligand>
</feature>
<feature type="site" description="Transition state stabilizer" evidence="1">
    <location>
        <position position="153"/>
    </location>
</feature>
<accession>Q3YSI5</accession>
<reference key="1">
    <citation type="journal article" date="2006" name="J. Bacteriol.">
        <title>The genome of the obligately intracellular bacterium Ehrlichia canis reveals themes of complex membrane structure and immune evasion strategies.</title>
        <authorList>
            <person name="Mavromatis K."/>
            <person name="Doyle C.K."/>
            <person name="Lykidis A."/>
            <person name="Ivanova N."/>
            <person name="Francino M.P."/>
            <person name="Chain P."/>
            <person name="Shin M."/>
            <person name="Malfatti S."/>
            <person name="Larimer F."/>
            <person name="Copeland A."/>
            <person name="Detter J.C."/>
            <person name="Land M."/>
            <person name="Richardson P.M."/>
            <person name="Yu X.J."/>
            <person name="Walker D.H."/>
            <person name="McBride J.W."/>
            <person name="Kyrpides N.C."/>
        </authorList>
    </citation>
    <scope>NUCLEOTIDE SEQUENCE [LARGE SCALE GENOMIC DNA]</scope>
    <source>
        <strain>Jake</strain>
    </source>
</reference>